<keyword id="KW-0067">ATP-binding</keyword>
<keyword id="KW-0963">Cytoplasm</keyword>
<keyword id="KW-0237">DNA synthesis</keyword>
<keyword id="KW-0418">Kinase</keyword>
<keyword id="KW-0547">Nucleotide-binding</keyword>
<keyword id="KW-0808">Transferase</keyword>
<name>KITH_XANC8</name>
<accession>Q4UNV0</accession>
<comment type="catalytic activity">
    <reaction evidence="1">
        <text>thymidine + ATP = dTMP + ADP + H(+)</text>
        <dbReference type="Rhea" id="RHEA:19129"/>
        <dbReference type="ChEBI" id="CHEBI:15378"/>
        <dbReference type="ChEBI" id="CHEBI:17748"/>
        <dbReference type="ChEBI" id="CHEBI:30616"/>
        <dbReference type="ChEBI" id="CHEBI:63528"/>
        <dbReference type="ChEBI" id="CHEBI:456216"/>
        <dbReference type="EC" id="2.7.1.21"/>
    </reaction>
</comment>
<comment type="subunit">
    <text evidence="1">Homotetramer.</text>
</comment>
<comment type="subcellular location">
    <subcellularLocation>
        <location evidence="1">Cytoplasm</location>
    </subcellularLocation>
</comment>
<comment type="similarity">
    <text evidence="1">Belongs to the thymidine kinase family.</text>
</comment>
<feature type="chain" id="PRO_0000242812" description="Thymidine kinase">
    <location>
        <begin position="1"/>
        <end position="209"/>
    </location>
</feature>
<feature type="active site" description="Proton acceptor" evidence="1">
    <location>
        <position position="89"/>
    </location>
</feature>
<feature type="binding site" evidence="1">
    <location>
        <begin position="9"/>
        <end position="16"/>
    </location>
    <ligand>
        <name>ATP</name>
        <dbReference type="ChEBI" id="CHEBI:30616"/>
    </ligand>
</feature>
<feature type="binding site" evidence="1">
    <location>
        <begin position="88"/>
        <end position="91"/>
    </location>
    <ligand>
        <name>ATP</name>
        <dbReference type="ChEBI" id="CHEBI:30616"/>
    </ligand>
</feature>
<proteinExistence type="inferred from homology"/>
<dbReference type="EC" id="2.7.1.21" evidence="1"/>
<dbReference type="EMBL" id="CP000050">
    <property type="protein sequence ID" value="AAY51273.1"/>
    <property type="molecule type" value="Genomic_DNA"/>
</dbReference>
<dbReference type="RefSeq" id="WP_011039212.1">
    <property type="nucleotide sequence ID" value="NZ_CP155948.1"/>
</dbReference>
<dbReference type="SMR" id="Q4UNV0"/>
<dbReference type="KEGG" id="xcb:XC_4235"/>
<dbReference type="HOGENOM" id="CLU_064400_2_1_6"/>
<dbReference type="Proteomes" id="UP000000420">
    <property type="component" value="Chromosome"/>
</dbReference>
<dbReference type="GO" id="GO:0005829">
    <property type="term" value="C:cytosol"/>
    <property type="evidence" value="ECO:0007669"/>
    <property type="project" value="TreeGrafter"/>
</dbReference>
<dbReference type="GO" id="GO:0005524">
    <property type="term" value="F:ATP binding"/>
    <property type="evidence" value="ECO:0007669"/>
    <property type="project" value="UniProtKB-UniRule"/>
</dbReference>
<dbReference type="GO" id="GO:0004797">
    <property type="term" value="F:thymidine kinase activity"/>
    <property type="evidence" value="ECO:0007669"/>
    <property type="project" value="UniProtKB-UniRule"/>
</dbReference>
<dbReference type="GO" id="GO:0071897">
    <property type="term" value="P:DNA biosynthetic process"/>
    <property type="evidence" value="ECO:0007669"/>
    <property type="project" value="UniProtKB-KW"/>
</dbReference>
<dbReference type="GO" id="GO:0046104">
    <property type="term" value="P:thymidine metabolic process"/>
    <property type="evidence" value="ECO:0007669"/>
    <property type="project" value="TreeGrafter"/>
</dbReference>
<dbReference type="FunFam" id="3.40.50.300:FF:000323">
    <property type="entry name" value="Thymidine kinase"/>
    <property type="match status" value="1"/>
</dbReference>
<dbReference type="Gene3D" id="3.40.50.300">
    <property type="entry name" value="P-loop containing nucleotide triphosphate hydrolases"/>
    <property type="match status" value="1"/>
</dbReference>
<dbReference type="HAMAP" id="MF_00124">
    <property type="entry name" value="Thymidine_kinase"/>
    <property type="match status" value="1"/>
</dbReference>
<dbReference type="InterPro" id="IPR027417">
    <property type="entry name" value="P-loop_NTPase"/>
</dbReference>
<dbReference type="InterPro" id="IPR001267">
    <property type="entry name" value="Thymidine_kinase"/>
</dbReference>
<dbReference type="NCBIfam" id="NF003300">
    <property type="entry name" value="PRK04296.1-5"/>
    <property type="match status" value="1"/>
</dbReference>
<dbReference type="PANTHER" id="PTHR11441">
    <property type="entry name" value="THYMIDINE KINASE"/>
    <property type="match status" value="1"/>
</dbReference>
<dbReference type="PANTHER" id="PTHR11441:SF0">
    <property type="entry name" value="THYMIDINE KINASE, CYTOSOLIC"/>
    <property type="match status" value="1"/>
</dbReference>
<dbReference type="Pfam" id="PF00265">
    <property type="entry name" value="TK"/>
    <property type="match status" value="1"/>
</dbReference>
<dbReference type="PIRSF" id="PIRSF035805">
    <property type="entry name" value="TK_cell"/>
    <property type="match status" value="1"/>
</dbReference>
<dbReference type="SUPFAM" id="SSF57716">
    <property type="entry name" value="Glucocorticoid receptor-like (DNA-binding domain)"/>
    <property type="match status" value="1"/>
</dbReference>
<dbReference type="SUPFAM" id="SSF52540">
    <property type="entry name" value="P-loop containing nucleoside triphosphate hydrolases"/>
    <property type="match status" value="1"/>
</dbReference>
<protein>
    <recommendedName>
        <fullName evidence="1">Thymidine kinase</fullName>
        <ecNumber evidence="1">2.7.1.21</ecNumber>
    </recommendedName>
</protein>
<organism>
    <name type="scientific">Xanthomonas campestris pv. campestris (strain 8004)</name>
    <dbReference type="NCBI Taxonomy" id="314565"/>
    <lineage>
        <taxon>Bacteria</taxon>
        <taxon>Pseudomonadati</taxon>
        <taxon>Pseudomonadota</taxon>
        <taxon>Gammaproteobacteria</taxon>
        <taxon>Lysobacterales</taxon>
        <taxon>Lysobacteraceae</taxon>
        <taxon>Xanthomonas</taxon>
    </lineage>
</organism>
<reference key="1">
    <citation type="journal article" date="2005" name="Genome Res.">
        <title>Comparative and functional genomic analyses of the pathogenicity of phytopathogen Xanthomonas campestris pv. campestris.</title>
        <authorList>
            <person name="Qian W."/>
            <person name="Jia Y."/>
            <person name="Ren S.-X."/>
            <person name="He Y.-Q."/>
            <person name="Feng J.-X."/>
            <person name="Lu L.-F."/>
            <person name="Sun Q."/>
            <person name="Ying G."/>
            <person name="Tang D.-J."/>
            <person name="Tang H."/>
            <person name="Wu W."/>
            <person name="Hao P."/>
            <person name="Wang L."/>
            <person name="Jiang B.-L."/>
            <person name="Zeng S."/>
            <person name="Gu W.-Y."/>
            <person name="Lu G."/>
            <person name="Rong L."/>
            <person name="Tian Y."/>
            <person name="Yao Z."/>
            <person name="Fu G."/>
            <person name="Chen B."/>
            <person name="Fang R."/>
            <person name="Qiang B."/>
            <person name="Chen Z."/>
            <person name="Zhao G.-P."/>
            <person name="Tang J.-L."/>
            <person name="He C."/>
        </authorList>
    </citation>
    <scope>NUCLEOTIDE SEQUENCE [LARGE SCALE GENOMIC DNA]</scope>
    <source>
        <strain>8004</strain>
    </source>
</reference>
<gene>
    <name evidence="1" type="primary">tdk</name>
    <name type="ordered locus">XC_4235</name>
</gene>
<sequence>MAKLYFYYSAMNAGKTTTLLQSAHNYRERGMRTSILTPKLDHRAGSGVVASRIGLRADGQTFDRQTELLQLIERDIAAHGPLHCVLVDEAQFLSSAQVWQLSEVVDRLRIPVLCYGLRTDFRGELFEGSQFLLAWADELEEIKTICHSGSKATMTVRVDAQGHAVQDGPQVEIGGNERYVSVSRAEFKKIMRGEGRIDPLQIALPLPPA</sequence>
<evidence type="ECO:0000255" key="1">
    <source>
        <dbReference type="HAMAP-Rule" id="MF_00124"/>
    </source>
</evidence>